<sequence>MIWGVLMMGILLPQCSAHPGFFTSIGQMTDLIHNEKDLVTSLKDYIKAEEDKLEQIKKWAEKLDRLTSTATKDPEGFVGHPVNAFKLMKRLNTEWSELENLILKDMSDGFISNLTIQRQYFPNDEDQVGAAKALFRLQDTYNLDTNTISKGNLPGVKHKSFLTAEDCFELGKVAYTEADYYHTELWMEQALMQLEEGEMSTVDKVSVLDYLSYAVYQQGDLDKALLLTKKLLELDPEHQRANGNLVYFEYIMSKEKDANKSASGDQSDQKTTPKKKGIAVDYLPERQKYEMLCRGEGIKMTPRRQKRLFCRYHDGNRNPKFILAPAKQEDEWDKPRIIRFHDIISDAEIEIVKDLAKPRLSRATVHDPETGKLTTAQYRVSKSAWLSGYEDPVVSRINMRIQDLTGLDVSTAEELQVANYGVGGQYEPHFDFARKDEPDAFRELGTGNRIATWLFYMSDVSAGGATVFPEVGASVWPKKGTAVFWYNLFASGEGDYSTRHAACPVLVGNKWVSNKWLHERGQEFRRPCTLSELE</sequence>
<dbReference type="EC" id="1.14.11.2" evidence="2"/>
<dbReference type="EMBL" id="X78949">
    <property type="protein sequence ID" value="CAA55546.1"/>
    <property type="molecule type" value="mRNA"/>
</dbReference>
<dbReference type="EMBL" id="BC078703">
    <property type="protein sequence ID" value="AAH78703.1"/>
    <property type="molecule type" value="mRNA"/>
</dbReference>
<dbReference type="PIR" id="S44204">
    <property type="entry name" value="S44204"/>
</dbReference>
<dbReference type="RefSeq" id="NP_742059.2">
    <property type="nucleotide sequence ID" value="NM_172062.3"/>
</dbReference>
<dbReference type="RefSeq" id="XP_006256486.1">
    <property type="nucleotide sequence ID" value="XM_006256424.5"/>
</dbReference>
<dbReference type="SMR" id="P54001"/>
<dbReference type="BioGRID" id="249090">
    <property type="interactions" value="1"/>
</dbReference>
<dbReference type="FunCoup" id="P54001">
    <property type="interactions" value="998"/>
</dbReference>
<dbReference type="IntAct" id="P54001">
    <property type="interactions" value="7"/>
</dbReference>
<dbReference type="STRING" id="10116.ENSRNOP00000064405"/>
<dbReference type="BindingDB" id="P54001"/>
<dbReference type="ChEMBL" id="CHEMBL3301"/>
<dbReference type="GlyCosmos" id="P54001">
    <property type="glycosylation" value="2 sites, No reported glycans"/>
</dbReference>
<dbReference type="GlyGen" id="P54001">
    <property type="glycosylation" value="2 sites"/>
</dbReference>
<dbReference type="PhosphoSitePlus" id="P54001"/>
<dbReference type="jPOST" id="P54001"/>
<dbReference type="PaxDb" id="10116-ENSRNOP00000064405"/>
<dbReference type="Ensembl" id="ENSRNOT00000106077.1">
    <property type="protein sequence ID" value="ENSRNOP00000084000.1"/>
    <property type="gene ID" value="ENSRNOG00000050655.2"/>
</dbReference>
<dbReference type="GeneID" id="64475"/>
<dbReference type="KEGG" id="rno:64475"/>
<dbReference type="AGR" id="RGD:621000"/>
<dbReference type="CTD" id="5033"/>
<dbReference type="RGD" id="621000">
    <property type="gene designation" value="P4ha1"/>
</dbReference>
<dbReference type="eggNOG" id="KOG1591">
    <property type="taxonomic scope" value="Eukaryota"/>
</dbReference>
<dbReference type="GeneTree" id="ENSGT00940000156635"/>
<dbReference type="HOGENOM" id="CLU_024155_1_1_1"/>
<dbReference type="InParanoid" id="P54001"/>
<dbReference type="OrthoDB" id="420380at2759"/>
<dbReference type="PhylomeDB" id="P54001"/>
<dbReference type="BRENDA" id="1.14.11.2">
    <property type="organism ID" value="5301"/>
</dbReference>
<dbReference type="Reactome" id="R-RNO-1650814">
    <property type="pathway name" value="Collagen biosynthesis and modifying enzymes"/>
</dbReference>
<dbReference type="PRO" id="PR:P54001"/>
<dbReference type="Proteomes" id="UP000002494">
    <property type="component" value="Chromosome 20"/>
</dbReference>
<dbReference type="Bgee" id="ENSRNOG00000050655">
    <property type="expression patterns" value="Expressed in skeletal muscle tissue and 19 other cell types or tissues"/>
</dbReference>
<dbReference type="GO" id="GO:0005783">
    <property type="term" value="C:endoplasmic reticulum"/>
    <property type="evidence" value="ECO:0000318"/>
    <property type="project" value="GO_Central"/>
</dbReference>
<dbReference type="GO" id="GO:0005788">
    <property type="term" value="C:endoplasmic reticulum lumen"/>
    <property type="evidence" value="ECO:0007669"/>
    <property type="project" value="UniProtKB-SubCell"/>
</dbReference>
<dbReference type="GO" id="GO:0016222">
    <property type="term" value="C:procollagen-proline 4-dioxygenase complex"/>
    <property type="evidence" value="ECO:0000266"/>
    <property type="project" value="RGD"/>
</dbReference>
<dbReference type="GO" id="GO:0042802">
    <property type="term" value="F:identical protein binding"/>
    <property type="evidence" value="ECO:0000266"/>
    <property type="project" value="RGD"/>
</dbReference>
<dbReference type="GO" id="GO:0005506">
    <property type="term" value="F:iron ion binding"/>
    <property type="evidence" value="ECO:0007669"/>
    <property type="project" value="InterPro"/>
</dbReference>
<dbReference type="GO" id="GO:0031418">
    <property type="term" value="F:L-ascorbic acid binding"/>
    <property type="evidence" value="ECO:0007669"/>
    <property type="project" value="UniProtKB-KW"/>
</dbReference>
<dbReference type="GO" id="GO:0004656">
    <property type="term" value="F:procollagen-proline 4-dioxygenase activity"/>
    <property type="evidence" value="ECO:0000250"/>
    <property type="project" value="UniProtKB"/>
</dbReference>
<dbReference type="GO" id="GO:0030199">
    <property type="term" value="P:collagen fibril organization"/>
    <property type="evidence" value="ECO:0000266"/>
    <property type="project" value="RGD"/>
</dbReference>
<dbReference type="FunFam" id="1.25.40.10:FF:000006">
    <property type="entry name" value="Prolyl 4-hydroxylase subunit alpha 2"/>
    <property type="match status" value="1"/>
</dbReference>
<dbReference type="FunFam" id="2.60.120.620:FF:000001">
    <property type="entry name" value="Prolyl 4-hydroxylase subunit alpha 2"/>
    <property type="match status" value="1"/>
</dbReference>
<dbReference type="Gene3D" id="6.10.140.1460">
    <property type="match status" value="1"/>
</dbReference>
<dbReference type="Gene3D" id="2.60.120.620">
    <property type="entry name" value="q2cbj1_9rhob like domain"/>
    <property type="match status" value="1"/>
</dbReference>
<dbReference type="Gene3D" id="1.25.40.10">
    <property type="entry name" value="Tetratricopeptide repeat domain"/>
    <property type="match status" value="1"/>
</dbReference>
<dbReference type="InterPro" id="IPR005123">
    <property type="entry name" value="Oxoglu/Fe-dep_dioxygenase_dom"/>
</dbReference>
<dbReference type="InterPro" id="IPR045054">
    <property type="entry name" value="P4HA-like"/>
</dbReference>
<dbReference type="InterPro" id="IPR006620">
    <property type="entry name" value="Pro_4_hyd_alph"/>
</dbReference>
<dbReference type="InterPro" id="IPR044862">
    <property type="entry name" value="Pro_4_hyd_alph_FE2OG_OXY"/>
</dbReference>
<dbReference type="InterPro" id="IPR013547">
    <property type="entry name" value="Pro_4_hyd_alph_N"/>
</dbReference>
<dbReference type="InterPro" id="IPR011990">
    <property type="entry name" value="TPR-like_helical_dom_sf"/>
</dbReference>
<dbReference type="InterPro" id="IPR019734">
    <property type="entry name" value="TPR_rpt"/>
</dbReference>
<dbReference type="PANTHER" id="PTHR10869">
    <property type="entry name" value="PROLYL 4-HYDROXYLASE ALPHA SUBUNIT"/>
    <property type="match status" value="1"/>
</dbReference>
<dbReference type="PANTHER" id="PTHR10869:SF101">
    <property type="entry name" value="PROLYL 4-HYDROXYLASE SUBUNIT ALPHA-1"/>
    <property type="match status" value="1"/>
</dbReference>
<dbReference type="Pfam" id="PF13640">
    <property type="entry name" value="2OG-FeII_Oxy_3"/>
    <property type="match status" value="1"/>
</dbReference>
<dbReference type="Pfam" id="PF08336">
    <property type="entry name" value="P4Ha_N"/>
    <property type="match status" value="1"/>
</dbReference>
<dbReference type="Pfam" id="PF23558">
    <property type="entry name" value="TPR_P4H"/>
    <property type="match status" value="1"/>
</dbReference>
<dbReference type="SMART" id="SM00702">
    <property type="entry name" value="P4Hc"/>
    <property type="match status" value="1"/>
</dbReference>
<dbReference type="SUPFAM" id="SSF48452">
    <property type="entry name" value="TPR-like"/>
    <property type="match status" value="1"/>
</dbReference>
<dbReference type="PROSITE" id="PS51471">
    <property type="entry name" value="FE2OG_OXY"/>
    <property type="match status" value="1"/>
</dbReference>
<dbReference type="PROSITE" id="PS50005">
    <property type="entry name" value="TPR"/>
    <property type="match status" value="1"/>
</dbReference>
<dbReference type="PROSITE" id="PS50293">
    <property type="entry name" value="TPR_REGION"/>
    <property type="match status" value="1"/>
</dbReference>
<protein>
    <recommendedName>
        <fullName>Prolyl 4-hydroxylase subunit alpha-1</fullName>
        <shortName>4-PH alpha-1</shortName>
        <ecNumber evidence="2">1.14.11.2</ecNumber>
    </recommendedName>
    <alternativeName>
        <fullName>Procollagen-proline,2-oxoglutarate-4-dioxygenase subunit alpha-1</fullName>
    </alternativeName>
</protein>
<keyword id="KW-0223">Dioxygenase</keyword>
<keyword id="KW-0256">Endoplasmic reticulum</keyword>
<keyword id="KW-0325">Glycoprotein</keyword>
<keyword id="KW-0408">Iron</keyword>
<keyword id="KW-0479">Metal-binding</keyword>
<keyword id="KW-0560">Oxidoreductase</keyword>
<keyword id="KW-1185">Reference proteome</keyword>
<keyword id="KW-0732">Signal</keyword>
<keyword id="KW-0802">TPR repeat</keyword>
<keyword id="KW-0847">Vitamin C</keyword>
<gene>
    <name type="primary">P4ha1</name>
    <name type="synonym">P4ha</name>
</gene>
<organism>
    <name type="scientific">Rattus norvegicus</name>
    <name type="common">Rat</name>
    <dbReference type="NCBI Taxonomy" id="10116"/>
    <lineage>
        <taxon>Eukaryota</taxon>
        <taxon>Metazoa</taxon>
        <taxon>Chordata</taxon>
        <taxon>Craniata</taxon>
        <taxon>Vertebrata</taxon>
        <taxon>Euteleostomi</taxon>
        <taxon>Mammalia</taxon>
        <taxon>Eutheria</taxon>
        <taxon>Euarchontoglires</taxon>
        <taxon>Glires</taxon>
        <taxon>Rodentia</taxon>
        <taxon>Myomorpha</taxon>
        <taxon>Muroidea</taxon>
        <taxon>Muridae</taxon>
        <taxon>Murinae</taxon>
        <taxon>Rattus</taxon>
    </lineage>
</organism>
<reference key="1">
    <citation type="journal article" date="1994" name="Gene">
        <title>The complete cDNA derived sequence of the rat prolyl 4-hydroxylase alpha subunit.</title>
        <authorList>
            <person name="Hopkinson I."/>
            <person name="Smith S.A."/>
            <person name="Donne A."/>
            <person name="Gregory H."/>
            <person name="Franklin T.J."/>
            <person name="Grant M.E."/>
            <person name="Rosamond J."/>
        </authorList>
    </citation>
    <scope>NUCLEOTIDE SEQUENCE [MRNA]</scope>
</reference>
<reference key="2">
    <citation type="journal article" date="2004" name="Genome Res.">
        <title>The status, quality, and expansion of the NIH full-length cDNA project: the Mammalian Gene Collection (MGC).</title>
        <authorList>
            <consortium name="The MGC Project Team"/>
        </authorList>
    </citation>
    <scope>NUCLEOTIDE SEQUENCE [LARGE SCALE MRNA]</scope>
    <source>
        <tissue>Testis</tissue>
    </source>
</reference>
<proteinExistence type="evidence at transcript level"/>
<name>P4HA1_RAT</name>
<accession>P54001</accession>
<accession>Q6AZ74</accession>
<evidence type="ECO:0000250" key="1"/>
<evidence type="ECO:0000250" key="2">
    <source>
        <dbReference type="UniProtKB" id="P13674"/>
    </source>
</evidence>
<evidence type="ECO:0000255" key="3"/>
<evidence type="ECO:0000255" key="4">
    <source>
        <dbReference type="PROSITE-ProRule" id="PRU00805"/>
    </source>
</evidence>
<evidence type="ECO:0000305" key="5"/>
<comment type="function">
    <text evidence="2">Catalyzes the post-translational formation of 4-hydroxyproline in -Xaa-Pro-Gly- sequences in collagens and other proteins.</text>
</comment>
<comment type="catalytic activity">
    <reaction evidence="2">
        <text>L-prolyl-[collagen] + 2-oxoglutarate + O2 = trans-4-hydroxy-L-prolyl-[collagen] + succinate + CO2</text>
        <dbReference type="Rhea" id="RHEA:18945"/>
        <dbReference type="Rhea" id="RHEA-COMP:11676"/>
        <dbReference type="Rhea" id="RHEA-COMP:11680"/>
        <dbReference type="ChEBI" id="CHEBI:15379"/>
        <dbReference type="ChEBI" id="CHEBI:16526"/>
        <dbReference type="ChEBI" id="CHEBI:16810"/>
        <dbReference type="ChEBI" id="CHEBI:30031"/>
        <dbReference type="ChEBI" id="CHEBI:50342"/>
        <dbReference type="ChEBI" id="CHEBI:61965"/>
        <dbReference type="EC" id="1.14.11.2"/>
    </reaction>
</comment>
<comment type="cofactor">
    <cofactor evidence="4">
        <name>Fe(2+)</name>
        <dbReference type="ChEBI" id="CHEBI:29033"/>
    </cofactor>
    <text evidence="4">Binds 1 Fe(2+) ion per subunit.</text>
</comment>
<comment type="cofactor">
    <cofactor evidence="2">
        <name>L-ascorbate</name>
        <dbReference type="ChEBI" id="CHEBI:38290"/>
    </cofactor>
</comment>
<comment type="subunit">
    <text evidence="2">Heterotetramer of two alpha-1 chains and two beta chains (P4HB)(the beta chain is the multi-functional PDI), where P4HB plays the role of a structural subunit; this tetramer catalyzes the formation of 4-hydroxyproline in collagen.</text>
</comment>
<comment type="subcellular location">
    <subcellularLocation>
        <location evidence="1">Endoplasmic reticulum lumen</location>
    </subcellularLocation>
</comment>
<comment type="similarity">
    <text evidence="5">Belongs to the P4HA family.</text>
</comment>
<feature type="signal peptide" evidence="1">
    <location>
        <begin position="1"/>
        <end position="17"/>
    </location>
</feature>
<feature type="chain" id="PRO_0000022725" description="Prolyl 4-hydroxylase subunit alpha-1">
    <location>
        <begin position="18"/>
        <end position="534"/>
    </location>
</feature>
<feature type="repeat" description="TPR">
    <location>
        <begin position="205"/>
        <end position="238"/>
    </location>
</feature>
<feature type="domain" description="Fe2OG dioxygenase" evidence="4">
    <location>
        <begin position="411"/>
        <end position="519"/>
    </location>
</feature>
<feature type="binding site" evidence="4">
    <location>
        <position position="429"/>
    </location>
    <ligand>
        <name>Fe cation</name>
        <dbReference type="ChEBI" id="CHEBI:24875"/>
    </ligand>
</feature>
<feature type="binding site" evidence="4">
    <location>
        <position position="431"/>
    </location>
    <ligand>
        <name>Fe cation</name>
        <dbReference type="ChEBI" id="CHEBI:24875"/>
    </ligand>
</feature>
<feature type="binding site" evidence="4">
    <location>
        <position position="500"/>
    </location>
    <ligand>
        <name>Fe cation</name>
        <dbReference type="ChEBI" id="CHEBI:24875"/>
    </ligand>
</feature>
<feature type="binding site" evidence="4">
    <location>
        <position position="510"/>
    </location>
    <ligand>
        <name>2-oxoglutarate</name>
        <dbReference type="ChEBI" id="CHEBI:16810"/>
    </ligand>
</feature>
<feature type="glycosylation site" description="N-linked (GlcNAc...) asparagine" evidence="3">
    <location>
        <position position="113"/>
    </location>
</feature>
<feature type="glycosylation site" description="N-linked (GlcNAc...) asparagine" evidence="3">
    <location>
        <position position="259"/>
    </location>
</feature>
<feature type="sequence conflict" description="In Ref. 1; CAA55546." evidence="5" ref="1">
    <original>DQS</original>
    <variation>ERA</variation>
    <location>
        <begin position="265"/>
        <end position="267"/>
    </location>
</feature>